<sequence length="110" mass="12324">MALWMRLLPLLAFLILWEPSPAHAFVNQHLCGSHLVEALYLVCGERGFFYTPKFRRGVDDPQMPQLELGGSPGAGDLRALALEVARQKRGIVEQCCTGICSLYQLENYCN</sequence>
<gene>
    <name type="primary">INS</name>
</gene>
<proteinExistence type="inferred from homology"/>
<organism>
    <name type="scientific">Psammomys obesus</name>
    <name type="common">Fat sand rat</name>
    <dbReference type="NCBI Taxonomy" id="48139"/>
    <lineage>
        <taxon>Eukaryota</taxon>
        <taxon>Metazoa</taxon>
        <taxon>Chordata</taxon>
        <taxon>Craniata</taxon>
        <taxon>Vertebrata</taxon>
        <taxon>Euteleostomi</taxon>
        <taxon>Mammalia</taxon>
        <taxon>Eutheria</taxon>
        <taxon>Euarchontoglires</taxon>
        <taxon>Glires</taxon>
        <taxon>Rodentia</taxon>
        <taxon>Myomorpha</taxon>
        <taxon>Muroidea</taxon>
        <taxon>Muridae</taxon>
        <taxon>Gerbillinae</taxon>
        <taxon>Psammomys</taxon>
    </lineage>
</organism>
<reference key="1">
    <citation type="journal article" date="1997" name="Diabetes">
        <title>Characterization of the unusual insulin of Psammomys obesus, a rodent with nutrition-induced NIDDM-like syndrome.</title>
        <authorList>
            <person name="Kaiser N."/>
            <person name="Bailyes E.M."/>
            <person name="Schneider B.S."/>
            <person name="Cerasi E."/>
            <person name="Steiner D.F."/>
            <person name="Hutton J.C."/>
            <person name="Gross D.J."/>
        </authorList>
    </citation>
    <scope>NUCLEOTIDE SEQUENCE [MRNA]</scope>
    <source>
        <tissue>Pancreas</tissue>
    </source>
</reference>
<feature type="signal peptide" evidence="1">
    <location>
        <begin position="1"/>
        <end position="24"/>
    </location>
</feature>
<feature type="peptide" id="PRO_0000015889" description="Insulin B chain">
    <location>
        <begin position="25"/>
        <end position="54"/>
    </location>
</feature>
<feature type="propeptide" id="PRO_0000015890" description="C peptide">
    <location>
        <begin position="57"/>
        <end position="87"/>
    </location>
</feature>
<feature type="peptide" id="PRO_0000015891" description="Insulin A chain">
    <location>
        <begin position="90"/>
        <end position="110"/>
    </location>
</feature>
<feature type="disulfide bond" description="Interchain (between B and A chains)" evidence="1">
    <location>
        <begin position="31"/>
        <end position="96"/>
    </location>
</feature>
<feature type="disulfide bond" description="Interchain (between B and A chains)" evidence="1">
    <location>
        <begin position="43"/>
        <end position="109"/>
    </location>
</feature>
<feature type="disulfide bond" evidence="1">
    <location>
        <begin position="95"/>
        <end position="100"/>
    </location>
</feature>
<comment type="function">
    <text>Insulin decreases blood glucose concentration. It increases cell permeability to monosaccharides, amino acids and fatty acids. It accelerates glycolysis, the pentose phosphate cycle, and glycogen synthesis in liver.</text>
</comment>
<comment type="subunit">
    <text>Heterodimer of a B chain and an A chain linked by two disulfide bonds.</text>
</comment>
<comment type="subcellular location">
    <subcellularLocation>
        <location>Secreted</location>
    </subcellularLocation>
</comment>
<comment type="similarity">
    <text evidence="2">Belongs to the insulin family.</text>
</comment>
<keyword id="KW-0119">Carbohydrate metabolism</keyword>
<keyword id="KW-0165">Cleavage on pair of basic residues</keyword>
<keyword id="KW-1015">Disulfide bond</keyword>
<keyword id="KW-0313">Glucose metabolism</keyword>
<keyword id="KW-0372">Hormone</keyword>
<keyword id="KW-0964">Secreted</keyword>
<keyword id="KW-0732">Signal</keyword>
<name>INS_PSAOB</name>
<accession>Q62587</accession>
<dbReference type="EMBL" id="X98241">
    <property type="protein sequence ID" value="CAA66897.1"/>
    <property type="molecule type" value="mRNA"/>
</dbReference>
<dbReference type="SMR" id="Q62587"/>
<dbReference type="GO" id="GO:0005615">
    <property type="term" value="C:extracellular space"/>
    <property type="evidence" value="ECO:0007669"/>
    <property type="project" value="TreeGrafter"/>
</dbReference>
<dbReference type="GO" id="GO:0005179">
    <property type="term" value="F:hormone activity"/>
    <property type="evidence" value="ECO:0007669"/>
    <property type="project" value="UniProtKB-KW"/>
</dbReference>
<dbReference type="GO" id="GO:0005158">
    <property type="term" value="F:insulin receptor binding"/>
    <property type="evidence" value="ECO:0007669"/>
    <property type="project" value="TreeGrafter"/>
</dbReference>
<dbReference type="GO" id="GO:1901701">
    <property type="term" value="P:cellular response to oxygen-containing compound"/>
    <property type="evidence" value="ECO:0007669"/>
    <property type="project" value="UniProtKB-ARBA"/>
</dbReference>
<dbReference type="GO" id="GO:0042593">
    <property type="term" value="P:glucose homeostasis"/>
    <property type="evidence" value="ECO:0007669"/>
    <property type="project" value="TreeGrafter"/>
</dbReference>
<dbReference type="GO" id="GO:0006006">
    <property type="term" value="P:glucose metabolic process"/>
    <property type="evidence" value="ECO:0007669"/>
    <property type="project" value="UniProtKB-KW"/>
</dbReference>
<dbReference type="GO" id="GO:0050714">
    <property type="term" value="P:positive regulation of protein secretion"/>
    <property type="evidence" value="ECO:0007669"/>
    <property type="project" value="TreeGrafter"/>
</dbReference>
<dbReference type="CDD" id="cd04367">
    <property type="entry name" value="IlGF_insulin_like"/>
    <property type="match status" value="1"/>
</dbReference>
<dbReference type="FunFam" id="1.10.100.10:FF:000003">
    <property type="entry name" value="Insulin"/>
    <property type="match status" value="1"/>
</dbReference>
<dbReference type="Gene3D" id="1.10.100.10">
    <property type="entry name" value="Insulin-like"/>
    <property type="match status" value="1"/>
</dbReference>
<dbReference type="InterPro" id="IPR004825">
    <property type="entry name" value="Insulin"/>
</dbReference>
<dbReference type="InterPro" id="IPR016179">
    <property type="entry name" value="Insulin-like"/>
</dbReference>
<dbReference type="InterPro" id="IPR036438">
    <property type="entry name" value="Insulin-like_sf"/>
</dbReference>
<dbReference type="InterPro" id="IPR022353">
    <property type="entry name" value="Insulin_CS"/>
</dbReference>
<dbReference type="InterPro" id="IPR022352">
    <property type="entry name" value="Insulin_family"/>
</dbReference>
<dbReference type="PANTHER" id="PTHR11454:SF9">
    <property type="entry name" value="INSULIN"/>
    <property type="match status" value="1"/>
</dbReference>
<dbReference type="PANTHER" id="PTHR11454">
    <property type="entry name" value="INSULIN/INSULIN GROWTH FACTOR"/>
    <property type="match status" value="1"/>
</dbReference>
<dbReference type="Pfam" id="PF00049">
    <property type="entry name" value="Insulin"/>
    <property type="match status" value="1"/>
</dbReference>
<dbReference type="PRINTS" id="PR00277">
    <property type="entry name" value="INSULIN"/>
</dbReference>
<dbReference type="PRINTS" id="PR00276">
    <property type="entry name" value="INSULINFAMLY"/>
</dbReference>
<dbReference type="SMART" id="SM00078">
    <property type="entry name" value="IlGF"/>
    <property type="match status" value="1"/>
</dbReference>
<dbReference type="SUPFAM" id="SSF56994">
    <property type="entry name" value="Insulin-like"/>
    <property type="match status" value="1"/>
</dbReference>
<dbReference type="PROSITE" id="PS00262">
    <property type="entry name" value="INSULIN"/>
    <property type="match status" value="1"/>
</dbReference>
<evidence type="ECO:0000250" key="1"/>
<evidence type="ECO:0000305" key="2"/>
<protein>
    <recommendedName>
        <fullName>Insulin</fullName>
    </recommendedName>
    <component>
        <recommendedName>
            <fullName>Insulin B chain</fullName>
        </recommendedName>
    </component>
    <component>
        <recommendedName>
            <fullName>Insulin A chain</fullName>
        </recommendedName>
    </component>
</protein>